<organism>
    <name type="scientific">Verminephrobacter eiseniae (strain EF01-2)</name>
    <dbReference type="NCBI Taxonomy" id="391735"/>
    <lineage>
        <taxon>Bacteria</taxon>
        <taxon>Pseudomonadati</taxon>
        <taxon>Pseudomonadota</taxon>
        <taxon>Betaproteobacteria</taxon>
        <taxon>Burkholderiales</taxon>
        <taxon>Comamonadaceae</taxon>
        <taxon>Verminephrobacter</taxon>
    </lineage>
</organism>
<gene>
    <name evidence="1" type="primary">hemA</name>
    <name type="ordered locus">Veis_1553</name>
</gene>
<feature type="chain" id="PRO_0000335079" description="Glutamyl-tRNA reductase">
    <location>
        <begin position="1"/>
        <end position="429"/>
    </location>
</feature>
<feature type="active site" description="Nucleophile" evidence="1">
    <location>
        <position position="53"/>
    </location>
</feature>
<feature type="binding site" evidence="1">
    <location>
        <begin position="52"/>
        <end position="55"/>
    </location>
    <ligand>
        <name>substrate</name>
    </ligand>
</feature>
<feature type="binding site" evidence="1">
    <location>
        <position position="110"/>
    </location>
    <ligand>
        <name>substrate</name>
    </ligand>
</feature>
<feature type="binding site" evidence="1">
    <location>
        <begin position="115"/>
        <end position="117"/>
    </location>
    <ligand>
        <name>substrate</name>
    </ligand>
</feature>
<feature type="binding site" evidence="1">
    <location>
        <position position="121"/>
    </location>
    <ligand>
        <name>substrate</name>
    </ligand>
</feature>
<feature type="binding site" evidence="1">
    <location>
        <begin position="190"/>
        <end position="195"/>
    </location>
    <ligand>
        <name>NADP(+)</name>
        <dbReference type="ChEBI" id="CHEBI:58349"/>
    </ligand>
</feature>
<feature type="site" description="Important for activity" evidence="1">
    <location>
        <position position="100"/>
    </location>
</feature>
<protein>
    <recommendedName>
        <fullName evidence="1">Glutamyl-tRNA reductase</fullName>
        <shortName evidence="1">GluTR</shortName>
        <ecNumber evidence="1">1.2.1.70</ecNumber>
    </recommendedName>
</protein>
<sequence>MAVWALGINHSTAPLDLRGRFAFALDQIAPRLQGLRQSLSSHPGVETAMLSTCNRTEIYCAAEQAAIDHTLGWLAHSGGVSTALLRAHSYTLQDSRAARHAFRVASGLDSMVLGEAQILGQMKDAVRAAETAGVLGSTLNQLFQRSFAVAKEVRSSTEIGAHSISMAAAAVRLAGQLFEDLSQIRVLFVGAGAMIALCATHFAAKNPLGLALANRTLERGEQLAARFGATVLRLADLPERLHEFDAVISCTASSLPIIGLGAVERALKKRRHRPMFMVDLAVPRDIEPEVKALGDVYLYTVDDLASVVQTGQASRQAAVAQAEAIIDAGVQSFMHWLAQRNPVGGVVPLIRQLNAQTEVWRASEIARAKKLLAKGEAPDAVLDALARGLTQKMLHGTMAELRAGDADMRAQTAQTVARLFLRAQSNHDL</sequence>
<reference key="1">
    <citation type="submission" date="2006-12" db="EMBL/GenBank/DDBJ databases">
        <title>Complete sequence of chromosome 1 of Verminephrobacter eiseniae EF01-2.</title>
        <authorList>
            <person name="Copeland A."/>
            <person name="Lucas S."/>
            <person name="Lapidus A."/>
            <person name="Barry K."/>
            <person name="Detter J.C."/>
            <person name="Glavina del Rio T."/>
            <person name="Dalin E."/>
            <person name="Tice H."/>
            <person name="Pitluck S."/>
            <person name="Chertkov O."/>
            <person name="Brettin T."/>
            <person name="Bruce D."/>
            <person name="Han C."/>
            <person name="Tapia R."/>
            <person name="Gilna P."/>
            <person name="Schmutz J."/>
            <person name="Larimer F."/>
            <person name="Land M."/>
            <person name="Hauser L."/>
            <person name="Kyrpides N."/>
            <person name="Kim E."/>
            <person name="Stahl D."/>
            <person name="Richardson P."/>
        </authorList>
    </citation>
    <scope>NUCLEOTIDE SEQUENCE [LARGE SCALE GENOMIC DNA]</scope>
    <source>
        <strain>EF01-2</strain>
    </source>
</reference>
<dbReference type="EC" id="1.2.1.70" evidence="1"/>
<dbReference type="EMBL" id="CP000542">
    <property type="protein sequence ID" value="ABM57312.1"/>
    <property type="molecule type" value="Genomic_DNA"/>
</dbReference>
<dbReference type="RefSeq" id="WP_011809319.1">
    <property type="nucleotide sequence ID" value="NC_008786.1"/>
</dbReference>
<dbReference type="SMR" id="A1WI55"/>
<dbReference type="STRING" id="391735.Veis_1553"/>
<dbReference type="GeneID" id="76460173"/>
<dbReference type="KEGG" id="vei:Veis_1553"/>
<dbReference type="eggNOG" id="COG0373">
    <property type="taxonomic scope" value="Bacteria"/>
</dbReference>
<dbReference type="HOGENOM" id="CLU_035113_2_2_4"/>
<dbReference type="OrthoDB" id="110209at2"/>
<dbReference type="UniPathway" id="UPA00251">
    <property type="reaction ID" value="UER00316"/>
</dbReference>
<dbReference type="Proteomes" id="UP000000374">
    <property type="component" value="Chromosome"/>
</dbReference>
<dbReference type="GO" id="GO:0008883">
    <property type="term" value="F:glutamyl-tRNA reductase activity"/>
    <property type="evidence" value="ECO:0007669"/>
    <property type="project" value="UniProtKB-UniRule"/>
</dbReference>
<dbReference type="GO" id="GO:0050661">
    <property type="term" value="F:NADP binding"/>
    <property type="evidence" value="ECO:0007669"/>
    <property type="project" value="InterPro"/>
</dbReference>
<dbReference type="GO" id="GO:0019353">
    <property type="term" value="P:protoporphyrinogen IX biosynthetic process from glutamate"/>
    <property type="evidence" value="ECO:0007669"/>
    <property type="project" value="TreeGrafter"/>
</dbReference>
<dbReference type="CDD" id="cd05213">
    <property type="entry name" value="NAD_bind_Glutamyl_tRNA_reduct"/>
    <property type="match status" value="1"/>
</dbReference>
<dbReference type="FunFam" id="3.30.460.30:FF:000001">
    <property type="entry name" value="Glutamyl-tRNA reductase"/>
    <property type="match status" value="1"/>
</dbReference>
<dbReference type="FunFam" id="3.40.50.720:FF:000031">
    <property type="entry name" value="Glutamyl-tRNA reductase"/>
    <property type="match status" value="1"/>
</dbReference>
<dbReference type="Gene3D" id="3.30.460.30">
    <property type="entry name" value="Glutamyl-tRNA reductase, N-terminal domain"/>
    <property type="match status" value="1"/>
</dbReference>
<dbReference type="Gene3D" id="3.40.50.720">
    <property type="entry name" value="NAD(P)-binding Rossmann-like Domain"/>
    <property type="match status" value="1"/>
</dbReference>
<dbReference type="HAMAP" id="MF_00087">
    <property type="entry name" value="Glu_tRNA_reductase"/>
    <property type="match status" value="1"/>
</dbReference>
<dbReference type="InterPro" id="IPR000343">
    <property type="entry name" value="4pyrrol_synth_GluRdtase"/>
</dbReference>
<dbReference type="InterPro" id="IPR015896">
    <property type="entry name" value="4pyrrol_synth_GluRdtase_dimer"/>
</dbReference>
<dbReference type="InterPro" id="IPR015895">
    <property type="entry name" value="4pyrrol_synth_GluRdtase_N"/>
</dbReference>
<dbReference type="InterPro" id="IPR018214">
    <property type="entry name" value="GluRdtase_CS"/>
</dbReference>
<dbReference type="InterPro" id="IPR036453">
    <property type="entry name" value="GluRdtase_dimer_dom_sf"/>
</dbReference>
<dbReference type="InterPro" id="IPR036343">
    <property type="entry name" value="GluRdtase_N_sf"/>
</dbReference>
<dbReference type="InterPro" id="IPR036291">
    <property type="entry name" value="NAD(P)-bd_dom_sf"/>
</dbReference>
<dbReference type="InterPro" id="IPR006151">
    <property type="entry name" value="Shikm_DH/Glu-tRNA_Rdtase"/>
</dbReference>
<dbReference type="NCBIfam" id="TIGR01035">
    <property type="entry name" value="hemA"/>
    <property type="match status" value="1"/>
</dbReference>
<dbReference type="PANTHER" id="PTHR43013">
    <property type="entry name" value="GLUTAMYL-TRNA REDUCTASE"/>
    <property type="match status" value="1"/>
</dbReference>
<dbReference type="PANTHER" id="PTHR43013:SF1">
    <property type="entry name" value="GLUTAMYL-TRNA REDUCTASE"/>
    <property type="match status" value="1"/>
</dbReference>
<dbReference type="Pfam" id="PF00745">
    <property type="entry name" value="GlutR_dimer"/>
    <property type="match status" value="1"/>
</dbReference>
<dbReference type="Pfam" id="PF05201">
    <property type="entry name" value="GlutR_N"/>
    <property type="match status" value="1"/>
</dbReference>
<dbReference type="Pfam" id="PF01488">
    <property type="entry name" value="Shikimate_DH"/>
    <property type="match status" value="1"/>
</dbReference>
<dbReference type="PIRSF" id="PIRSF000445">
    <property type="entry name" value="4pyrrol_synth_GluRdtase"/>
    <property type="match status" value="1"/>
</dbReference>
<dbReference type="SUPFAM" id="SSF69742">
    <property type="entry name" value="Glutamyl tRNA-reductase catalytic, N-terminal domain"/>
    <property type="match status" value="1"/>
</dbReference>
<dbReference type="SUPFAM" id="SSF69075">
    <property type="entry name" value="Glutamyl tRNA-reductase dimerization domain"/>
    <property type="match status" value="1"/>
</dbReference>
<dbReference type="SUPFAM" id="SSF51735">
    <property type="entry name" value="NAD(P)-binding Rossmann-fold domains"/>
    <property type="match status" value="1"/>
</dbReference>
<dbReference type="PROSITE" id="PS00747">
    <property type="entry name" value="GLUTR"/>
    <property type="match status" value="1"/>
</dbReference>
<evidence type="ECO:0000255" key="1">
    <source>
        <dbReference type="HAMAP-Rule" id="MF_00087"/>
    </source>
</evidence>
<comment type="function">
    <text evidence="1">Catalyzes the NADPH-dependent reduction of glutamyl-tRNA(Glu) to glutamate 1-semialdehyde (GSA).</text>
</comment>
<comment type="catalytic activity">
    <reaction evidence="1">
        <text>(S)-4-amino-5-oxopentanoate + tRNA(Glu) + NADP(+) = L-glutamyl-tRNA(Glu) + NADPH + H(+)</text>
        <dbReference type="Rhea" id="RHEA:12344"/>
        <dbReference type="Rhea" id="RHEA-COMP:9663"/>
        <dbReference type="Rhea" id="RHEA-COMP:9680"/>
        <dbReference type="ChEBI" id="CHEBI:15378"/>
        <dbReference type="ChEBI" id="CHEBI:57501"/>
        <dbReference type="ChEBI" id="CHEBI:57783"/>
        <dbReference type="ChEBI" id="CHEBI:58349"/>
        <dbReference type="ChEBI" id="CHEBI:78442"/>
        <dbReference type="ChEBI" id="CHEBI:78520"/>
        <dbReference type="EC" id="1.2.1.70"/>
    </reaction>
</comment>
<comment type="pathway">
    <text evidence="1">Porphyrin-containing compound metabolism; protoporphyrin-IX biosynthesis; 5-aminolevulinate from L-glutamyl-tRNA(Glu): step 1/2.</text>
</comment>
<comment type="subunit">
    <text evidence="1">Homodimer.</text>
</comment>
<comment type="domain">
    <text evidence="1">Possesses an unusual extended V-shaped dimeric structure with each monomer consisting of three distinct domains arranged along a curved 'spinal' alpha-helix. The N-terminal catalytic domain specifically recognizes the glutamate moiety of the substrate. The second domain is the NADPH-binding domain, and the third C-terminal domain is responsible for dimerization.</text>
</comment>
<comment type="miscellaneous">
    <text evidence="1">During catalysis, the active site Cys acts as a nucleophile attacking the alpha-carbonyl group of tRNA-bound glutamate with the formation of a thioester intermediate between enzyme and glutamate, and the concomitant release of tRNA(Glu). The thioester intermediate is finally reduced by direct hydride transfer from NADPH, to form the product GSA.</text>
</comment>
<comment type="similarity">
    <text evidence="1">Belongs to the glutamyl-tRNA reductase family.</text>
</comment>
<keyword id="KW-0521">NADP</keyword>
<keyword id="KW-0560">Oxidoreductase</keyword>
<keyword id="KW-0627">Porphyrin biosynthesis</keyword>
<keyword id="KW-1185">Reference proteome</keyword>
<name>HEM1_VEREI</name>
<proteinExistence type="inferred from homology"/>
<accession>A1WI55</accession>